<organismHost>
    <name type="scientific">Homo sapiens</name>
    <name type="common">Human</name>
    <dbReference type="NCBI Taxonomy" id="9606"/>
</organismHost>
<feature type="chain" id="PRO_0000085347" description="Protein Tat">
    <location>
        <begin position="1"/>
        <end position="101"/>
    </location>
</feature>
<feature type="region of interest" description="Transactivation" evidence="1">
    <location>
        <begin position="1"/>
        <end position="48"/>
    </location>
</feature>
<feature type="region of interest" description="Interaction with human CREBBP" evidence="1">
    <location>
        <begin position="1"/>
        <end position="24"/>
    </location>
</feature>
<feature type="region of interest" description="Cysteine-rich" evidence="1">
    <location>
        <begin position="22"/>
        <end position="37"/>
    </location>
</feature>
<feature type="region of interest" description="Core" evidence="1">
    <location>
        <begin position="38"/>
        <end position="48"/>
    </location>
</feature>
<feature type="region of interest" description="Disordered" evidence="2">
    <location>
        <begin position="47"/>
        <end position="101"/>
    </location>
</feature>
<feature type="region of interest" description="Interaction with the host capping enzyme RNGTT" evidence="1">
    <location>
        <begin position="49"/>
        <end position="86"/>
    </location>
</feature>
<feature type="short sequence motif" description="Nuclear localization signal, RNA-binding (TAR), and protein transduction" evidence="1">
    <location>
        <begin position="49"/>
        <end position="57"/>
    </location>
</feature>
<feature type="short sequence motif" description="Cell attachment site" evidence="1">
    <location>
        <begin position="78"/>
        <end position="80"/>
    </location>
</feature>
<feature type="compositionally biased region" description="Basic residues" evidence="2">
    <location>
        <begin position="48"/>
        <end position="58"/>
    </location>
</feature>
<feature type="compositionally biased region" description="Polar residues" evidence="2">
    <location>
        <begin position="61"/>
        <end position="79"/>
    </location>
</feature>
<feature type="compositionally biased region" description="Basic and acidic residues" evidence="2">
    <location>
        <begin position="83"/>
        <end position="101"/>
    </location>
</feature>
<feature type="binding site" evidence="1">
    <location>
        <position position="22"/>
    </location>
    <ligand>
        <name>Zn(2+)</name>
        <dbReference type="ChEBI" id="CHEBI:29105"/>
        <label>1</label>
    </ligand>
</feature>
<feature type="binding site" evidence="1">
    <location>
        <position position="25"/>
    </location>
    <ligand>
        <name>Zn(2+)</name>
        <dbReference type="ChEBI" id="CHEBI:29105"/>
        <label>2</label>
    </ligand>
</feature>
<feature type="binding site" evidence="1">
    <location>
        <position position="27"/>
    </location>
    <ligand>
        <name>Zn(2+)</name>
        <dbReference type="ChEBI" id="CHEBI:29105"/>
        <label>2</label>
    </ligand>
</feature>
<feature type="binding site" evidence="1">
    <location>
        <position position="30"/>
    </location>
    <ligand>
        <name>Zn(2+)</name>
        <dbReference type="ChEBI" id="CHEBI:29105"/>
        <label>2</label>
    </ligand>
</feature>
<feature type="binding site" evidence="1">
    <location>
        <position position="33"/>
    </location>
    <ligand>
        <name>Zn(2+)</name>
        <dbReference type="ChEBI" id="CHEBI:29105"/>
        <label>1</label>
    </ligand>
</feature>
<feature type="binding site" evidence="1">
    <location>
        <position position="34"/>
    </location>
    <ligand>
        <name>Zn(2+)</name>
        <dbReference type="ChEBI" id="CHEBI:29105"/>
        <label>1</label>
    </ligand>
</feature>
<feature type="binding site" evidence="1">
    <location>
        <position position="37"/>
    </location>
    <ligand>
        <name>Zn(2+)</name>
        <dbReference type="ChEBI" id="CHEBI:29105"/>
        <label>1</label>
    </ligand>
</feature>
<feature type="site" description="Essential for Tat translocation through the endosomal membrane" evidence="1">
    <location>
        <position position="11"/>
    </location>
</feature>
<feature type="modified residue" description="N6-acetyllysine; by host PCAF" evidence="1">
    <location>
        <position position="28"/>
    </location>
</feature>
<feature type="modified residue" description="N6-acetyllysine; by host EP300 and GCN5L2" evidence="1">
    <location>
        <position position="50"/>
    </location>
</feature>
<feature type="modified residue" description="N6-acetyllysine; by host EP300 and GCN5L2" evidence="1">
    <location>
        <position position="51"/>
    </location>
</feature>
<feature type="modified residue" description="Asymmetric dimethylarginine; by host PRMT6" evidence="1">
    <location>
        <position position="52"/>
    </location>
</feature>
<feature type="modified residue" description="Asymmetric dimethylarginine; by host PRMT6" evidence="1">
    <location>
        <position position="53"/>
    </location>
</feature>
<feature type="cross-link" description="Glycyl lysine isopeptide (Lys-Gly) (interchain with G-Cter in ubiquitin)" evidence="1">
    <location>
        <position position="71"/>
    </location>
</feature>
<feature type="splice variant" id="VSP_022409" description="In isoform Short.">
    <location>
        <begin position="73"/>
        <end position="101"/>
    </location>
</feature>
<organism>
    <name type="scientific">Human immunodeficiency virus type 1 group M subtype B (isolate CDC-451)</name>
    <name type="common">HIV-1</name>
    <dbReference type="NCBI Taxonomy" id="11687"/>
    <lineage>
        <taxon>Viruses</taxon>
        <taxon>Riboviria</taxon>
        <taxon>Pararnavirae</taxon>
        <taxon>Artverviricota</taxon>
        <taxon>Revtraviricetes</taxon>
        <taxon>Ortervirales</taxon>
        <taxon>Retroviridae</taxon>
        <taxon>Orthoretrovirinae</taxon>
        <taxon>Lentivirus</taxon>
        <taxon>Human immunodeficiency virus type 1</taxon>
    </lineage>
</organism>
<gene>
    <name evidence="1" type="primary">tat</name>
</gene>
<keyword id="KW-0002">3D-structure</keyword>
<keyword id="KW-0007">Acetylation</keyword>
<keyword id="KW-0010">Activator</keyword>
<keyword id="KW-0014">AIDS</keyword>
<keyword id="KW-0025">Alternative splicing</keyword>
<keyword id="KW-0053">Apoptosis</keyword>
<keyword id="KW-1035">Host cytoplasm</keyword>
<keyword id="KW-1048">Host nucleus</keyword>
<keyword id="KW-0945">Host-virus interaction</keyword>
<keyword id="KW-1090">Inhibition of host innate immune response by virus</keyword>
<keyword id="KW-1114">Inhibition of host interferon signaling pathway by virus</keyword>
<keyword id="KW-0922">Interferon antiviral system evasion</keyword>
<keyword id="KW-1017">Isopeptide bond</keyword>
<keyword id="KW-0479">Metal-binding</keyword>
<keyword id="KW-0488">Methylation</keyword>
<keyword id="KW-1122">Modulation of host chromatin by virus</keyword>
<keyword id="KW-1126">Modulation of host PP1 activity by virus</keyword>
<keyword id="KW-0597">Phosphoprotein</keyword>
<keyword id="KW-0694">RNA-binding</keyword>
<keyword id="KW-0964">Secreted</keyword>
<keyword id="KW-0804">Transcription</keyword>
<keyword id="KW-0805">Transcription regulation</keyword>
<keyword id="KW-0832">Ubl conjugation</keyword>
<keyword id="KW-0899">Viral immunoevasion</keyword>
<keyword id="KW-0862">Zinc</keyword>
<accession>P05907</accession>
<name>TAT_HV1C4</name>
<proteinExistence type="evidence at protein level"/>
<reference key="1">
    <citation type="journal article" date="1986" name="Proc. Natl. Acad. Sci. U.S.A.">
        <title>Molecular cloning and primary nucleotide sequence analysis of a distinct human immunodeficiency virus isolate reveal significant divergence in its genomic sequences.</title>
        <authorList>
            <person name="Desai S.M."/>
            <person name="Kalyanaraman V.S."/>
            <person name="Casey J.M."/>
            <person name="Srinivasan A."/>
            <person name="Andersen P.R."/>
            <person name="Devare S.G."/>
        </authorList>
    </citation>
    <scope>NUCLEOTIDE SEQUENCE [GENOMIC RNA]</scope>
</reference>
<reference key="2">
    <citation type="journal article" date="2005" name="Microbes Infect.">
        <title>Decoding Tat: the biology of HIV Tat posttranslational modifications.</title>
        <authorList>
            <person name="Hetzer C."/>
            <person name="Dormeyer W."/>
            <person name="Schnolzer M."/>
            <person name="Ott M."/>
        </authorList>
    </citation>
    <scope>REVIEW</scope>
    <scope>ALTERNATIVE SPLICING</scope>
</reference>
<reference key="3">
    <citation type="journal article" date="2006" name="Front. Biosci.">
        <title>The multiple functions of HIV-1 Tat: proliferation versus apoptosis.</title>
        <authorList>
            <person name="Peruzzi F."/>
        </authorList>
    </citation>
    <scope>REVIEW</scope>
</reference>
<reference key="4">
    <citation type="journal article" date="2006" name="Microbes Infect.">
        <title>HIV tat and neurotoxicity.</title>
        <authorList>
            <person name="King J.E."/>
            <person name="Eugenin E.A."/>
            <person name="Buckner C.M."/>
            <person name="Berman J.W."/>
        </authorList>
    </citation>
    <scope>REVIEW</scope>
</reference>
<evidence type="ECO:0000255" key="1">
    <source>
        <dbReference type="HAMAP-Rule" id="MF_04079"/>
    </source>
</evidence>
<evidence type="ECO:0000256" key="2">
    <source>
        <dbReference type="SAM" id="MobiDB-lite"/>
    </source>
</evidence>
<evidence type="ECO:0000305" key="3"/>
<sequence>MEPVDPRLEPWKHPGSQPKTACTNCYCKKCCFHCQVCFTKKALGISYGRKKRRQRRRAHQDSQNHQASLSKQPSSQTRGDPTGPKEPKKEVEREAETDPLD</sequence>
<dbReference type="EMBL" id="AH002346">
    <property type="protein sequence ID" value="AAA44309.1"/>
    <property type="molecule type" value="Genomic_RNA"/>
</dbReference>
<dbReference type="PDB" id="9DE5">
    <property type="method" value="X-ray"/>
    <property type="resolution" value="2.75 A"/>
    <property type="chains" value="A=44-60"/>
</dbReference>
<dbReference type="PDBsum" id="9DE5"/>
<dbReference type="SMR" id="P05907"/>
<dbReference type="GO" id="GO:0005576">
    <property type="term" value="C:extracellular region"/>
    <property type="evidence" value="ECO:0007669"/>
    <property type="project" value="UniProtKB-SubCell"/>
</dbReference>
<dbReference type="GO" id="GO:0030430">
    <property type="term" value="C:host cell cytoplasm"/>
    <property type="evidence" value="ECO:0007669"/>
    <property type="project" value="UniProtKB-SubCell"/>
</dbReference>
<dbReference type="GO" id="GO:0044196">
    <property type="term" value="C:host cell nucleolus"/>
    <property type="evidence" value="ECO:0007669"/>
    <property type="project" value="UniProtKB-SubCell"/>
</dbReference>
<dbReference type="GO" id="GO:0042805">
    <property type="term" value="F:actinin binding"/>
    <property type="evidence" value="ECO:0007669"/>
    <property type="project" value="UniProtKB-UniRule"/>
</dbReference>
<dbReference type="GO" id="GO:0030332">
    <property type="term" value="F:cyclin binding"/>
    <property type="evidence" value="ECO:0007669"/>
    <property type="project" value="UniProtKB-UniRule"/>
</dbReference>
<dbReference type="GO" id="GO:0046872">
    <property type="term" value="F:metal ion binding"/>
    <property type="evidence" value="ECO:0007669"/>
    <property type="project" value="UniProtKB-UniRule"/>
</dbReference>
<dbReference type="GO" id="GO:0019904">
    <property type="term" value="F:protein domain specific binding"/>
    <property type="evidence" value="ECO:0007669"/>
    <property type="project" value="UniProtKB-UniRule"/>
</dbReference>
<dbReference type="GO" id="GO:0004865">
    <property type="term" value="F:protein serine/threonine phosphatase inhibitor activity"/>
    <property type="evidence" value="ECO:0007669"/>
    <property type="project" value="UniProtKB-KW"/>
</dbReference>
<dbReference type="GO" id="GO:0001070">
    <property type="term" value="F:RNA-binding transcription regulator activity"/>
    <property type="evidence" value="ECO:0007669"/>
    <property type="project" value="UniProtKB-UniRule"/>
</dbReference>
<dbReference type="GO" id="GO:1990970">
    <property type="term" value="F:trans-activation response element binding"/>
    <property type="evidence" value="ECO:0007669"/>
    <property type="project" value="UniProtKB-UniRule"/>
</dbReference>
<dbReference type="GO" id="GO:0006351">
    <property type="term" value="P:DNA-templated transcription"/>
    <property type="evidence" value="ECO:0007669"/>
    <property type="project" value="UniProtKB-UniRule"/>
</dbReference>
<dbReference type="GO" id="GO:0032968">
    <property type="term" value="P:positive regulation of transcription elongation by RNA polymerase II"/>
    <property type="evidence" value="ECO:0007669"/>
    <property type="project" value="UniProtKB-UniRule"/>
</dbReference>
<dbReference type="GO" id="GO:0050434">
    <property type="term" value="P:positive regulation of viral transcription"/>
    <property type="evidence" value="ECO:0007669"/>
    <property type="project" value="UniProtKB-UniRule"/>
</dbReference>
<dbReference type="GO" id="GO:0039525">
    <property type="term" value="P:symbiont-mediated perturbation of host chromatin organization"/>
    <property type="evidence" value="ECO:0007669"/>
    <property type="project" value="UniProtKB-UniRule"/>
</dbReference>
<dbReference type="GO" id="GO:0052170">
    <property type="term" value="P:symbiont-mediated suppression of host innate immune response"/>
    <property type="evidence" value="ECO:0007669"/>
    <property type="project" value="UniProtKB-KW"/>
</dbReference>
<dbReference type="GO" id="GO:0039606">
    <property type="term" value="P:symbiont-mediated suppression of host translation initiation"/>
    <property type="evidence" value="ECO:0007669"/>
    <property type="project" value="UniProtKB-KW"/>
</dbReference>
<dbReference type="GO" id="GO:0039502">
    <property type="term" value="P:symbiont-mediated suppression of host type I interferon-mediated signaling pathway"/>
    <property type="evidence" value="ECO:0007669"/>
    <property type="project" value="UniProtKB-UniRule"/>
</dbReference>
<dbReference type="FunFam" id="4.10.20.10:FF:000001">
    <property type="entry name" value="Protein Tat"/>
    <property type="match status" value="1"/>
</dbReference>
<dbReference type="Gene3D" id="4.10.20.10">
    <property type="entry name" value="Tat domain"/>
    <property type="match status" value="1"/>
</dbReference>
<dbReference type="HAMAP" id="MF_04079">
    <property type="entry name" value="HIV_TAT"/>
    <property type="match status" value="1"/>
</dbReference>
<dbReference type="InterPro" id="IPR001831">
    <property type="entry name" value="IV_Tat"/>
</dbReference>
<dbReference type="InterPro" id="IPR036963">
    <property type="entry name" value="Tat_dom_sf"/>
</dbReference>
<dbReference type="Pfam" id="PF00539">
    <property type="entry name" value="Tat"/>
    <property type="match status" value="1"/>
</dbReference>
<dbReference type="PRINTS" id="PR00055">
    <property type="entry name" value="HIVTATDOMAIN"/>
</dbReference>
<protein>
    <recommendedName>
        <fullName evidence="1">Protein Tat</fullName>
    </recommendedName>
    <alternativeName>
        <fullName evidence="1">Transactivating regulatory protein</fullName>
    </alternativeName>
</protein>
<comment type="function">
    <text evidence="1">Transcriptional activator that increases RNA Pol II processivity, thereby increasing the level of full-length viral transcripts. Recognizes a hairpin structure at the 5'-LTR of the nascent viral mRNAs referred to as the transactivation responsive RNA element (TAR) and recruits the cyclin T1-CDK9 complex (P-TEFb complex) that will in turn hyperphosphorylate the RNA polymerase II to allow efficient elongation. The CDK9 component of P-TEFb and other Tat-activated kinases hyperphosphorylate the C-terminus of RNA Pol II that becomes stabilized and much more processive. Other factors such as HTATSF1/Tat-SF1, SUPT5H/SPT5, and HTATIP2 are also important for Tat's function. Besides its effect on RNA Pol II processivity, Tat induces chromatin remodeling of proviral genes by recruiting the histone acetyltransferases (HATs) CREBBP, EP300 and PCAF to the chromatin. This also contributes to the increase in proviral transcription rate, especially when the provirus integrates in transcriptionally silent region of the host genome. To ensure maximal activation of the LTR, Tat mediates nuclear translocation of NF-kappa-B by interacting with host RELA. Through its interaction with host TBP, Tat may also modulate transcription initiation. Tat can reactivate a latently infected cell by penetrating in it and transactivating its LTR promoter. In the cytoplasm, Tat is thought to act as a translational activator of HIV-1 mRNAs.</text>
</comment>
<comment type="function">
    <text evidence="1">Extracellular circulating Tat can be endocytosed by surrounding uninfected cells via the binding to several surface receptors such as CD26, CXCR4, heparan sulfate proteoglycans (HSPG) or LDLR. Neurons are rarely infected, but they internalize Tat via their LDLR. Through its interaction with nuclear HATs, Tat is potentially able to control the acetylation-dependent cellular gene expression. Modulates the expression of many cellular genes involved in cell survival, proliferation or in coding for cytokines or cytokine receptors. Tat plays a role in T-cell and neurons apoptosis. Tat induced neurotoxicity and apoptosis probably contribute to neuroAIDS. Circulating Tat also acts as a chemokine-like and/or growth factor-like molecule that binds to specific receptors on the surface of the cells, affecting many cellular pathways. In the vascular system, Tat binds to ITGAV/ITGB3 and ITGA5/ITGB1 integrins dimers at the surface of endothelial cells and competes with bFGF for heparin-binding sites, leading to an excess of soluble bFGF.</text>
</comment>
<comment type="subunit">
    <text evidence="1">Interacts with host CCNT1. Associates with the P-TEFb complex composed at least of Tat, P-TEFb (CDK9 and CCNT1), TAR RNA, RNA Pol II. Recruits the HATs CREBBP, TAF1/TFIID, EP300, PCAF and GCN5L2. Interacts with host KAT5/Tip60; this interaction targets the latter to degradation. Interacts with the host deacetylase SIRT1. Interacts with host capping enzyme RNGTT; this interaction stimulates RNGTT. Binds to host KDR, and to the host integrins ITGAV/ITGB3 and ITGA5/ITGB1. Interacts with host KPNB1/importin beta-1 without previous binding to KPNA1/importin alpha-1. Interacts with EIF2AK2. Interacts with host nucleosome assembly protein NAP1L1; this interaction may be required for the transport of Tat within the nucleus, since the two proteins interact at the nuclear rim. Interacts with host C1QBP/SF2P32; this interaction involves lysine-acetylated Tat. Interacts with the host chemokine receptors CCR2, CCR3 and CXCR4. Interacts with host DPP4/CD26; this interaction may trigger an anti-proliferative effect. Interacts with host LDLR. Interacts with the host extracellular matrix metalloproteinase MMP1. Interacts with host PRMT6; this interaction mediates Tat's methylation. Interacts with, and is ubiquitinated by MDM2/Hdm2. Interacts with host PSMC3 and HTATIP2. Interacts with STAB1; this interaction may overcome SATB1-mediated repression of IL2 and IL2RA (interleukin) in T cells by binding to the same domain than HDAC1. Interacts (when acetylated) with human CDK13, thereby increasing HIV-1 mRNA splicing and promoting the production of the doubly spliced HIV-1 protein Nef. Interacts with host TBP; this interaction modulates the activity of transcriptional pre-initiation complex. Interacts with host RELA. Interacts with host PLSCR1; this interaction negatively regulates Tat transactivation activity by altering its subcellular distribution.</text>
</comment>
<comment type="subcellular location">
    <subcellularLocation>
        <location evidence="1">Host nucleus</location>
        <location evidence="1">Host nucleolus</location>
    </subcellularLocation>
    <subcellularLocation>
        <location evidence="1">Host cytoplasm</location>
    </subcellularLocation>
    <subcellularLocation>
        <location evidence="1">Secreted</location>
    </subcellularLocation>
    <text evidence="1">Probably localizes to both nuclear and nucleolar compartments. Nuclear localization is mediated through the interaction of the nuclear localization signal with importin KPNB1. Secretion occurs through a Golgi-independent pathway. Tat is released from infected cells to the extracellular space where it remains associated to the cell membrane, or is secreted into the cerebrospinal fluid and sera. Extracellular Tat can be endocytosed by surrounding uninfected cells via binding to several receptors depending on the cell type.</text>
</comment>
<comment type="alternative products">
    <event type="alternative splicing"/>
    <isoform>
        <id>P05907-1</id>
        <name>Long</name>
        <sequence type="displayed"/>
    </isoform>
    <isoform>
        <id>P05907-2</id>
        <name>Short</name>
        <sequence type="described" ref="VSP_022409"/>
    </isoform>
</comment>
<comment type="domain">
    <text evidence="1">The cell attachment site mediates the interaction with ITGAV/ITGB3 and ITGA5/ITGB1 integrins, leading to vascular cell migration and invasion. This interaction also provides endothelial cells with the adhesion signal they require to grow in response to mitogens.</text>
</comment>
<comment type="domain">
    <text evidence="1">The Cys-rich region may bind 2 zinc ions. This region is involved in binding to KAT5.</text>
</comment>
<comment type="domain">
    <text evidence="1">The transactivation domain mediates the interaction with CCNT1, GCN5L2, and MDM2.</text>
</comment>
<comment type="domain">
    <text evidence="1">The Arg-rich RNA-binding region binds the TAR RNA. This region also mediates the nuclear localization through direct binding to KPNB1 and is involved in Tat's transfer across cell membranes (protein transduction). The same region is required for the interaction with EP300, PCAF, EIF2AK2 and KDR.</text>
</comment>
<comment type="PTM">
    <text evidence="1">Asymmetrical arginine methylation by host PRMT6 seems to diminish the transactivation capacity of Tat and affects the interaction with host CCNT1.</text>
</comment>
<comment type="PTM">
    <text evidence="1">Acetylation by EP300, CREBBP, GCN5L2/GCN5 and PCAF regulates the transactivation activity of Tat. EP300-mediated acetylation of Lys-50 promotes dissociation of Tat from the TAR RNA through the competitive binding to PCAF's bromodomain. In addition, the non-acetylated Tat's N-terminus can also interact with PCAF. PCAF-mediated acetylation of Lys-28 enhances Tat's binding to CCNT1. Lys-50 is deacetylated by SIRT1.</text>
</comment>
<comment type="PTM">
    <text evidence="1">Polyubiquitination by host MDM2 does not target Tat to degradation, but activates its transactivation function and fosters interaction with CCNT1 and TAR RNA.</text>
</comment>
<comment type="PTM">
    <text evidence="1">Phosphorylated by EIF2AK2 on serine and threonine residues adjacent to the basic region important for TAR RNA binding and function. Phosphorylation of Tat by EIF2AK2 is dependent on the prior activation of EIF2AK2 by dsRNA.</text>
</comment>
<comment type="miscellaneous">
    <text evidence="1">HIV-1 lineages are divided in three main groups, M (for Major), O (for Outlier), and N (for New, or Non-M, Non-O). The vast majority of strains found worldwide belong to the group M. Group O seems to be endemic to and largely confined to Cameroon and neighboring countries in West Central Africa, where these viruses represent a small minority of HIV-1 strains. The group N is represented by a limited number of isolates from Cameroonian persons. The group M is further subdivided in 9 clades or subtypes (A to D, F to H, J and K).</text>
</comment>
<comment type="miscellaneous">
    <molecule>Isoform Short</molecule>
    <text evidence="3">Expressed in the late stage of the infection cycle, when unspliced viral RNAs are exported to the cytoplasm by the viral Rev protein.</text>
</comment>
<comment type="similarity">
    <text evidence="1">Belongs to the lentiviruses Tat family.</text>
</comment>